<accession>Q13SQ0</accession>
<gene>
    <name evidence="1" type="primary">atpA2</name>
    <name type="ordered locus">Bxeno_A4351</name>
    <name type="ORF">Bxe_A0038</name>
</gene>
<feature type="chain" id="PRO_0000256084" description="ATP synthase subunit alpha 2">
    <location>
        <begin position="1"/>
        <end position="513"/>
    </location>
</feature>
<feature type="binding site" evidence="1">
    <location>
        <begin position="169"/>
        <end position="176"/>
    </location>
    <ligand>
        <name>ATP</name>
        <dbReference type="ChEBI" id="CHEBI:30616"/>
    </ligand>
</feature>
<feature type="site" description="Required for activity" evidence="1">
    <location>
        <position position="373"/>
    </location>
</feature>
<reference key="1">
    <citation type="journal article" date="2006" name="Proc. Natl. Acad. Sci. U.S.A.">
        <title>Burkholderia xenovorans LB400 harbors a multi-replicon, 9.73-Mbp genome shaped for versatility.</title>
        <authorList>
            <person name="Chain P.S.G."/>
            <person name="Denef V.J."/>
            <person name="Konstantinidis K.T."/>
            <person name="Vergez L.M."/>
            <person name="Agullo L."/>
            <person name="Reyes V.L."/>
            <person name="Hauser L."/>
            <person name="Cordova M."/>
            <person name="Gomez L."/>
            <person name="Gonzalez M."/>
            <person name="Land M."/>
            <person name="Lao V."/>
            <person name="Larimer F."/>
            <person name="LiPuma J.J."/>
            <person name="Mahenthiralingam E."/>
            <person name="Malfatti S.A."/>
            <person name="Marx C.J."/>
            <person name="Parnell J.J."/>
            <person name="Ramette A."/>
            <person name="Richardson P."/>
            <person name="Seeger M."/>
            <person name="Smith D."/>
            <person name="Spilker T."/>
            <person name="Sul W.J."/>
            <person name="Tsoi T.V."/>
            <person name="Ulrich L.E."/>
            <person name="Zhulin I.B."/>
            <person name="Tiedje J.M."/>
        </authorList>
    </citation>
    <scope>NUCLEOTIDE SEQUENCE [LARGE SCALE GENOMIC DNA]</scope>
    <source>
        <strain>LB400</strain>
    </source>
</reference>
<evidence type="ECO:0000255" key="1">
    <source>
        <dbReference type="HAMAP-Rule" id="MF_01346"/>
    </source>
</evidence>
<name>ATPA2_PARXL</name>
<proteinExistence type="inferred from homology"/>
<organism>
    <name type="scientific">Paraburkholderia xenovorans (strain LB400)</name>
    <dbReference type="NCBI Taxonomy" id="266265"/>
    <lineage>
        <taxon>Bacteria</taxon>
        <taxon>Pseudomonadati</taxon>
        <taxon>Pseudomonadota</taxon>
        <taxon>Betaproteobacteria</taxon>
        <taxon>Burkholderiales</taxon>
        <taxon>Burkholderiaceae</taxon>
        <taxon>Paraburkholderia</taxon>
    </lineage>
</organism>
<comment type="function">
    <text evidence="1">Produces ATP from ADP in the presence of a proton gradient across the membrane. The alpha chain is a regulatory subunit.</text>
</comment>
<comment type="catalytic activity">
    <reaction evidence="1">
        <text>ATP + H2O + 4 H(+)(in) = ADP + phosphate + 5 H(+)(out)</text>
        <dbReference type="Rhea" id="RHEA:57720"/>
        <dbReference type="ChEBI" id="CHEBI:15377"/>
        <dbReference type="ChEBI" id="CHEBI:15378"/>
        <dbReference type="ChEBI" id="CHEBI:30616"/>
        <dbReference type="ChEBI" id="CHEBI:43474"/>
        <dbReference type="ChEBI" id="CHEBI:456216"/>
        <dbReference type="EC" id="7.1.2.2"/>
    </reaction>
</comment>
<comment type="subunit">
    <text evidence="1">F-type ATPases have 2 components, CF(1) - the catalytic core - and CF(0) - the membrane proton channel. CF(1) has five subunits: alpha(3), beta(3), gamma(1), delta(1), epsilon(1). CF(0) has three main subunits: a(1), b(2) and c(9-12). The alpha and beta chains form an alternating ring which encloses part of the gamma chain. CF(1) is attached to CF(0) by a central stalk formed by the gamma and epsilon chains, while a peripheral stalk is formed by the delta and b chains.</text>
</comment>
<comment type="subcellular location">
    <subcellularLocation>
        <location evidence="1">Cell inner membrane</location>
        <topology evidence="1">Peripheral membrane protein</topology>
    </subcellularLocation>
</comment>
<comment type="similarity">
    <text evidence="1">Belongs to the ATPase alpha/beta chains family.</text>
</comment>
<dbReference type="EC" id="7.1.2.2" evidence="1"/>
<dbReference type="EMBL" id="CP000270">
    <property type="protein sequence ID" value="ABE32889.1"/>
    <property type="molecule type" value="Genomic_DNA"/>
</dbReference>
<dbReference type="RefSeq" id="WP_011490291.1">
    <property type="nucleotide sequence ID" value="NC_007951.1"/>
</dbReference>
<dbReference type="SMR" id="Q13SQ0"/>
<dbReference type="STRING" id="266265.Bxe_A0038"/>
<dbReference type="KEGG" id="bxb:DR64_2217"/>
<dbReference type="KEGG" id="bxe:Bxe_A0038"/>
<dbReference type="PATRIC" id="fig|266265.5.peg.4575"/>
<dbReference type="eggNOG" id="COG0056">
    <property type="taxonomic scope" value="Bacteria"/>
</dbReference>
<dbReference type="OrthoDB" id="9803053at2"/>
<dbReference type="Proteomes" id="UP000001817">
    <property type="component" value="Chromosome 1"/>
</dbReference>
<dbReference type="GO" id="GO:0005886">
    <property type="term" value="C:plasma membrane"/>
    <property type="evidence" value="ECO:0007669"/>
    <property type="project" value="UniProtKB-SubCell"/>
</dbReference>
<dbReference type="GO" id="GO:0045259">
    <property type="term" value="C:proton-transporting ATP synthase complex"/>
    <property type="evidence" value="ECO:0007669"/>
    <property type="project" value="UniProtKB-KW"/>
</dbReference>
<dbReference type="GO" id="GO:0043531">
    <property type="term" value="F:ADP binding"/>
    <property type="evidence" value="ECO:0007669"/>
    <property type="project" value="TreeGrafter"/>
</dbReference>
<dbReference type="GO" id="GO:0005524">
    <property type="term" value="F:ATP binding"/>
    <property type="evidence" value="ECO:0007669"/>
    <property type="project" value="UniProtKB-UniRule"/>
</dbReference>
<dbReference type="GO" id="GO:0046933">
    <property type="term" value="F:proton-transporting ATP synthase activity, rotational mechanism"/>
    <property type="evidence" value="ECO:0007669"/>
    <property type="project" value="UniProtKB-UniRule"/>
</dbReference>
<dbReference type="CDD" id="cd18113">
    <property type="entry name" value="ATP-synt_F1_alpha_C"/>
    <property type="match status" value="1"/>
</dbReference>
<dbReference type="CDD" id="cd18116">
    <property type="entry name" value="ATP-synt_F1_alpha_N"/>
    <property type="match status" value="1"/>
</dbReference>
<dbReference type="CDD" id="cd01132">
    <property type="entry name" value="F1-ATPase_alpha_CD"/>
    <property type="match status" value="1"/>
</dbReference>
<dbReference type="FunFam" id="1.20.150.20:FF:000001">
    <property type="entry name" value="ATP synthase subunit alpha"/>
    <property type="match status" value="1"/>
</dbReference>
<dbReference type="FunFam" id="2.40.30.20:FF:000001">
    <property type="entry name" value="ATP synthase subunit alpha"/>
    <property type="match status" value="1"/>
</dbReference>
<dbReference type="FunFam" id="3.40.50.300:FF:000002">
    <property type="entry name" value="ATP synthase subunit alpha"/>
    <property type="match status" value="1"/>
</dbReference>
<dbReference type="Gene3D" id="2.40.30.20">
    <property type="match status" value="1"/>
</dbReference>
<dbReference type="Gene3D" id="1.20.150.20">
    <property type="entry name" value="ATP synthase alpha/beta chain, C-terminal domain"/>
    <property type="match status" value="1"/>
</dbReference>
<dbReference type="Gene3D" id="3.40.50.300">
    <property type="entry name" value="P-loop containing nucleotide triphosphate hydrolases"/>
    <property type="match status" value="1"/>
</dbReference>
<dbReference type="HAMAP" id="MF_01346">
    <property type="entry name" value="ATP_synth_alpha_bact"/>
    <property type="match status" value="1"/>
</dbReference>
<dbReference type="InterPro" id="IPR023366">
    <property type="entry name" value="ATP_synth_asu-like_sf"/>
</dbReference>
<dbReference type="InterPro" id="IPR000793">
    <property type="entry name" value="ATP_synth_asu_C"/>
</dbReference>
<dbReference type="InterPro" id="IPR038376">
    <property type="entry name" value="ATP_synth_asu_C_sf"/>
</dbReference>
<dbReference type="InterPro" id="IPR033732">
    <property type="entry name" value="ATP_synth_F1_a_nt-bd_dom"/>
</dbReference>
<dbReference type="InterPro" id="IPR005294">
    <property type="entry name" value="ATP_synth_F1_asu"/>
</dbReference>
<dbReference type="InterPro" id="IPR020003">
    <property type="entry name" value="ATPase_a/bsu_AS"/>
</dbReference>
<dbReference type="InterPro" id="IPR004100">
    <property type="entry name" value="ATPase_F1/V1/A1_a/bsu_N"/>
</dbReference>
<dbReference type="InterPro" id="IPR036121">
    <property type="entry name" value="ATPase_F1/V1/A1_a/bsu_N_sf"/>
</dbReference>
<dbReference type="InterPro" id="IPR000194">
    <property type="entry name" value="ATPase_F1/V1/A1_a/bsu_nucl-bd"/>
</dbReference>
<dbReference type="InterPro" id="IPR027417">
    <property type="entry name" value="P-loop_NTPase"/>
</dbReference>
<dbReference type="NCBIfam" id="TIGR00962">
    <property type="entry name" value="atpA"/>
    <property type="match status" value="1"/>
</dbReference>
<dbReference type="NCBIfam" id="NF009884">
    <property type="entry name" value="PRK13343.1"/>
    <property type="match status" value="1"/>
</dbReference>
<dbReference type="PANTHER" id="PTHR48082">
    <property type="entry name" value="ATP SYNTHASE SUBUNIT ALPHA, MITOCHONDRIAL"/>
    <property type="match status" value="1"/>
</dbReference>
<dbReference type="PANTHER" id="PTHR48082:SF2">
    <property type="entry name" value="ATP SYNTHASE SUBUNIT ALPHA, MITOCHONDRIAL"/>
    <property type="match status" value="1"/>
</dbReference>
<dbReference type="Pfam" id="PF00006">
    <property type="entry name" value="ATP-synt_ab"/>
    <property type="match status" value="1"/>
</dbReference>
<dbReference type="Pfam" id="PF00306">
    <property type="entry name" value="ATP-synt_ab_C"/>
    <property type="match status" value="1"/>
</dbReference>
<dbReference type="Pfam" id="PF02874">
    <property type="entry name" value="ATP-synt_ab_N"/>
    <property type="match status" value="1"/>
</dbReference>
<dbReference type="PIRSF" id="PIRSF039088">
    <property type="entry name" value="F_ATPase_subunit_alpha"/>
    <property type="match status" value="1"/>
</dbReference>
<dbReference type="SUPFAM" id="SSF47917">
    <property type="entry name" value="C-terminal domain of alpha and beta subunits of F1 ATP synthase"/>
    <property type="match status" value="1"/>
</dbReference>
<dbReference type="SUPFAM" id="SSF50615">
    <property type="entry name" value="N-terminal domain of alpha and beta subunits of F1 ATP synthase"/>
    <property type="match status" value="1"/>
</dbReference>
<dbReference type="SUPFAM" id="SSF52540">
    <property type="entry name" value="P-loop containing nucleoside triphosphate hydrolases"/>
    <property type="match status" value="1"/>
</dbReference>
<dbReference type="PROSITE" id="PS00152">
    <property type="entry name" value="ATPASE_ALPHA_BETA"/>
    <property type="match status" value="1"/>
</dbReference>
<protein>
    <recommendedName>
        <fullName evidence="1">ATP synthase subunit alpha 2</fullName>
        <ecNumber evidence="1">7.1.2.2</ecNumber>
    </recommendedName>
    <alternativeName>
        <fullName evidence="1">ATP synthase F1 sector subunit alpha 2</fullName>
    </alternativeName>
    <alternativeName>
        <fullName evidence="1">F-ATPase subunit alpha 2</fullName>
    </alternativeName>
</protein>
<keyword id="KW-0066">ATP synthesis</keyword>
<keyword id="KW-0067">ATP-binding</keyword>
<keyword id="KW-0997">Cell inner membrane</keyword>
<keyword id="KW-1003">Cell membrane</keyword>
<keyword id="KW-0139">CF(1)</keyword>
<keyword id="KW-0375">Hydrogen ion transport</keyword>
<keyword id="KW-0406">Ion transport</keyword>
<keyword id="KW-0472">Membrane</keyword>
<keyword id="KW-0547">Nucleotide-binding</keyword>
<keyword id="KW-1185">Reference proteome</keyword>
<keyword id="KW-1278">Translocase</keyword>
<keyword id="KW-0813">Transport</keyword>
<sequence length="513" mass="55938">MQLNPSEISELIKSRIQGLEASADVRNQGTVISVTDGIVRIHGLSEVMQGEMLEFPGNTFGLALNLERDSVGAVILGEYEHISEGDVVKTTGRILEVPVGPELLGRVVDALGNPIDGKGPINAKKTDAIEKIAPGVIWRKSVSEPVQTGLKSIDAMVPVGRGQRELIIGDRQCGKTAVAVDTIINQKGKNLFCIYVAIGQKASSIMNVVRKLEETGALEYTIVVAASASESAAMQYLAPYAGCTMGEYFRDRGQDALIVYDDLTKQAWAYRQISLLLRRPPGREAYPGDVFYLHSRLLERAARVSEDYVEKFTNGEVKGKSGSLTALPVIETQAGDVTAFVPTNVISITDGQIFLETDLFNAGIRPAINAGVSVSRVGGAAQTKVVKKLSGGIRTDLAQYRELAAFAQFASDLDEATRKQLERGRRVTELLKQPQYQPLQVWELAVALFAANNGYLDDLEVAQVLPFEKGLRDYLKSKHADLIKRIEDTKELSKDDEALLHTALKDFKKSGAY</sequence>